<gene>
    <name evidence="1" type="primary">glnD</name>
    <name type="ordered locus">CCNA_00013</name>
</gene>
<accession>B8GWX0</accession>
<comment type="function">
    <text evidence="1">Modifies, by uridylylation and deuridylylation, the PII regulatory proteins (GlnB and homologs), in response to the nitrogen status of the cell that GlnD senses through the glutamine level. Under low glutamine levels, catalyzes the conversion of the PII proteins and UTP to PII-UMP and PPi, while under higher glutamine levels, GlnD hydrolyzes PII-UMP to PII and UMP (deuridylylation). Thus, controls uridylylation state and activity of the PII proteins, and plays an important role in the regulation of nitrogen assimilation and metabolism.</text>
</comment>
<comment type="catalytic activity">
    <reaction evidence="1">
        <text>[protein-PII]-L-tyrosine + UTP = [protein-PII]-uridylyl-L-tyrosine + diphosphate</text>
        <dbReference type="Rhea" id="RHEA:13673"/>
        <dbReference type="Rhea" id="RHEA-COMP:12147"/>
        <dbReference type="Rhea" id="RHEA-COMP:12148"/>
        <dbReference type="ChEBI" id="CHEBI:33019"/>
        <dbReference type="ChEBI" id="CHEBI:46398"/>
        <dbReference type="ChEBI" id="CHEBI:46858"/>
        <dbReference type="ChEBI" id="CHEBI:90602"/>
        <dbReference type="EC" id="2.7.7.59"/>
    </reaction>
</comment>
<comment type="catalytic activity">
    <reaction evidence="1">
        <text>[protein-PII]-uridylyl-L-tyrosine + H2O = [protein-PII]-L-tyrosine + UMP + H(+)</text>
        <dbReference type="Rhea" id="RHEA:48600"/>
        <dbReference type="Rhea" id="RHEA-COMP:12147"/>
        <dbReference type="Rhea" id="RHEA-COMP:12148"/>
        <dbReference type="ChEBI" id="CHEBI:15377"/>
        <dbReference type="ChEBI" id="CHEBI:15378"/>
        <dbReference type="ChEBI" id="CHEBI:46858"/>
        <dbReference type="ChEBI" id="CHEBI:57865"/>
        <dbReference type="ChEBI" id="CHEBI:90602"/>
    </reaction>
</comment>
<comment type="cofactor">
    <cofactor evidence="1">
        <name>Mg(2+)</name>
        <dbReference type="ChEBI" id="CHEBI:18420"/>
    </cofactor>
</comment>
<comment type="activity regulation">
    <text evidence="1">Uridylyltransferase (UTase) activity is inhibited by glutamine, while glutamine activates uridylyl-removing (UR) activity.</text>
</comment>
<comment type="domain">
    <text evidence="1">Has four distinct domains: an N-terminal nucleotidyltransferase (NT) domain responsible for UTase activity, a central HD domain that encodes UR activity, and two C-terminal ACT domains that seem to have a role in glutamine sensing.</text>
</comment>
<comment type="similarity">
    <text evidence="1">Belongs to the GlnD family.</text>
</comment>
<feature type="chain" id="PRO_1000132527" description="Bifunctional uridylyltransferase/uridylyl-removing enzyme">
    <location>
        <begin position="1"/>
        <end position="940"/>
    </location>
</feature>
<feature type="domain" description="HD" evidence="2">
    <location>
        <begin position="496"/>
        <end position="618"/>
    </location>
</feature>
<feature type="domain" description="ACT 1" evidence="1">
    <location>
        <begin position="737"/>
        <end position="821"/>
    </location>
</feature>
<feature type="domain" description="ACT 2" evidence="1">
    <location>
        <begin position="848"/>
        <end position="929"/>
    </location>
</feature>
<feature type="region of interest" description="Uridylyltransferase">
    <location>
        <begin position="1"/>
        <end position="379"/>
    </location>
</feature>
<feature type="region of interest" description="Uridylyl-removing">
    <location>
        <begin position="380"/>
        <end position="736"/>
    </location>
</feature>
<proteinExistence type="inferred from homology"/>
<reference key="1">
    <citation type="journal article" date="2010" name="J. Bacteriol.">
        <title>The genetic basis of laboratory adaptation in Caulobacter crescentus.</title>
        <authorList>
            <person name="Marks M.E."/>
            <person name="Castro-Rojas C.M."/>
            <person name="Teiling C."/>
            <person name="Du L."/>
            <person name="Kapatral V."/>
            <person name="Walunas T.L."/>
            <person name="Crosson S."/>
        </authorList>
    </citation>
    <scope>NUCLEOTIDE SEQUENCE [LARGE SCALE GENOMIC DNA]</scope>
    <source>
        <strain>NA1000 / CB15N</strain>
    </source>
</reference>
<keyword id="KW-0378">Hydrolase</keyword>
<keyword id="KW-0460">Magnesium</keyword>
<keyword id="KW-0511">Multifunctional enzyme</keyword>
<keyword id="KW-0548">Nucleotidyltransferase</keyword>
<keyword id="KW-1185">Reference proteome</keyword>
<keyword id="KW-0677">Repeat</keyword>
<keyword id="KW-0808">Transferase</keyword>
<organism>
    <name type="scientific">Caulobacter vibrioides (strain NA1000 / CB15N)</name>
    <name type="common">Caulobacter crescentus</name>
    <dbReference type="NCBI Taxonomy" id="565050"/>
    <lineage>
        <taxon>Bacteria</taxon>
        <taxon>Pseudomonadati</taxon>
        <taxon>Pseudomonadota</taxon>
        <taxon>Alphaproteobacteria</taxon>
        <taxon>Caulobacterales</taxon>
        <taxon>Caulobacteraceae</taxon>
        <taxon>Caulobacter</taxon>
    </lineage>
</organism>
<sequence>MPRRLRPTRLEHVVDGHALRARLSAAALDSIGNEAEQRARAIDILKQALFRGRMIAKERLENGASGVETSRLLSGVTDEVITALYDFTTVHVFRARNPTEGERLCLLAVGGYGRGTLAPFSDIDLLFLRPYKQTPHAESVIEYMLYALWDLGFKVGHASRTIEECVRLSKEDFTIRTSILEARRLTGDERLAEDLKKRFRDEVMKATGAQFVAAKLKERDDRQARAGASRYMVEPNVKEGKGGLRDLHTLMWIAEYLHPVDRPEDVFKMEVFSIRETKAFIRAFDFLHAVRAHLHFTTGRPEERLTFDLQPEIARRMGYGDRGDAPAVERFMRRYFLIAKEVGTLTRAFSAKLEAEHFKNEPKGISRFLPGARPKRKALDVEGFYEDGGRLNIEGQEIFEADPVNLIRLFKIADERDLDLHPDAFTAVTRALPLITSRVRRDPDACRAFLDLLARGKRSYRTLTLMNDAGVLGRFIPEFGRVVAQMQFNMYHSYTVDEHTLRAVGVIGDIAAGRLVDDHPLAVSIMPLIEDREALFLAMLLHDTGKGGVGGQEKAGARSARSACERLGVERSKVELVAWLVENHLVMSDFAQKRDVSDPGTVAAFARIVENPERLRLLLVITVADIRAVGPGVWNGWKGQLLRELYNATEAVFRGGRGSDAAANVQRHQESTAEAARAALLETDPAAKGWVAAMENAYFSAFSQDDLFHHAELARRAAIQGGAAAEGQVRPGSNAAEVVIAAKDRRGLFADLALAISSLGGNVVGARVFTSRQGQALDVFYVQDVTGAPFGCENPRALRRLADALEAAGKGDALAVEPRRGSEQTRAAAFAIAPSVTIDNDASNDATVVEASGRDRPGLLHALAKTLADSALSIQSAHIDGYGERAVDAFYVQTTEGGKVTDTRKLNALKADLLAALEQNEASAPAARPGLRRARASVAR</sequence>
<protein>
    <recommendedName>
        <fullName evidence="1">Bifunctional uridylyltransferase/uridylyl-removing enzyme</fullName>
        <shortName evidence="1">UTase/UR</shortName>
    </recommendedName>
    <alternativeName>
        <fullName evidence="1">Bifunctional [protein-PII] modification enzyme</fullName>
    </alternativeName>
    <alternativeName>
        <fullName evidence="1">Bifunctional nitrogen sensor protein</fullName>
    </alternativeName>
    <domain>
        <recommendedName>
            <fullName evidence="1">[Protein-PII] uridylyltransferase</fullName>
            <shortName evidence="1">PII uridylyltransferase</shortName>
            <shortName evidence="1">UTase</shortName>
            <ecNumber evidence="1">2.7.7.59</ecNumber>
        </recommendedName>
    </domain>
    <domain>
        <recommendedName>
            <fullName evidence="1">[Protein-PII]-UMP uridylyl-removing enzyme</fullName>
            <shortName evidence="1">UR</shortName>
            <ecNumber evidence="1">3.1.4.-</ecNumber>
        </recommendedName>
    </domain>
</protein>
<name>GLND_CAUVN</name>
<dbReference type="EC" id="2.7.7.59" evidence="1"/>
<dbReference type="EC" id="3.1.4.-" evidence="1"/>
<dbReference type="EMBL" id="CP001340">
    <property type="protein sequence ID" value="ACL93480.1"/>
    <property type="molecule type" value="Genomic_DNA"/>
</dbReference>
<dbReference type="RefSeq" id="WP_010917903.1">
    <property type="nucleotide sequence ID" value="NC_011916.1"/>
</dbReference>
<dbReference type="RefSeq" id="YP_002515388.1">
    <property type="nucleotide sequence ID" value="NC_011916.1"/>
</dbReference>
<dbReference type="SMR" id="B8GWX0"/>
<dbReference type="GeneID" id="7332895"/>
<dbReference type="KEGG" id="ccs:CCNA_00013"/>
<dbReference type="PATRIC" id="fig|565050.3.peg.14"/>
<dbReference type="HOGENOM" id="CLU_012833_1_0_5"/>
<dbReference type="OrthoDB" id="9758038at2"/>
<dbReference type="PhylomeDB" id="B8GWX0"/>
<dbReference type="Proteomes" id="UP000001364">
    <property type="component" value="Chromosome"/>
</dbReference>
<dbReference type="GO" id="GO:0008773">
    <property type="term" value="F:[protein-PII] uridylyltransferase activity"/>
    <property type="evidence" value="ECO:0007669"/>
    <property type="project" value="UniProtKB-UniRule"/>
</dbReference>
<dbReference type="GO" id="GO:0008081">
    <property type="term" value="F:phosphoric diester hydrolase activity"/>
    <property type="evidence" value="ECO:0007669"/>
    <property type="project" value="UniProtKB-UniRule"/>
</dbReference>
<dbReference type="GO" id="GO:0006808">
    <property type="term" value="P:regulation of nitrogen utilization"/>
    <property type="evidence" value="ECO:0007669"/>
    <property type="project" value="UniProtKB-UniRule"/>
</dbReference>
<dbReference type="CDD" id="cd04899">
    <property type="entry name" value="ACT_ACR-UUR-like_2"/>
    <property type="match status" value="1"/>
</dbReference>
<dbReference type="CDD" id="cd04900">
    <property type="entry name" value="ACT_UUR-like_1"/>
    <property type="match status" value="1"/>
</dbReference>
<dbReference type="CDD" id="cd00077">
    <property type="entry name" value="HDc"/>
    <property type="match status" value="1"/>
</dbReference>
<dbReference type="CDD" id="cd05401">
    <property type="entry name" value="NT_GlnE_GlnD_like"/>
    <property type="match status" value="1"/>
</dbReference>
<dbReference type="Gene3D" id="3.30.70.260">
    <property type="match status" value="1"/>
</dbReference>
<dbReference type="Gene3D" id="3.30.460.10">
    <property type="entry name" value="Beta Polymerase, domain 2"/>
    <property type="match status" value="1"/>
</dbReference>
<dbReference type="Gene3D" id="1.10.3090.10">
    <property type="entry name" value="cca-adding enzyme, domain 2"/>
    <property type="match status" value="1"/>
</dbReference>
<dbReference type="HAMAP" id="MF_00277">
    <property type="entry name" value="PII_uridylyl_transf"/>
    <property type="match status" value="1"/>
</dbReference>
<dbReference type="InterPro" id="IPR045865">
    <property type="entry name" value="ACT-like_dom_sf"/>
</dbReference>
<dbReference type="InterPro" id="IPR002912">
    <property type="entry name" value="ACT_dom"/>
</dbReference>
<dbReference type="InterPro" id="IPR003607">
    <property type="entry name" value="HD/PDEase_dom"/>
</dbReference>
<dbReference type="InterPro" id="IPR006674">
    <property type="entry name" value="HD_domain"/>
</dbReference>
<dbReference type="InterPro" id="IPR043519">
    <property type="entry name" value="NT_sf"/>
</dbReference>
<dbReference type="InterPro" id="IPR013546">
    <property type="entry name" value="PII_UdlTrfase/GS_AdlTrfase"/>
</dbReference>
<dbReference type="InterPro" id="IPR010043">
    <property type="entry name" value="UTase/UR"/>
</dbReference>
<dbReference type="NCBIfam" id="NF003467">
    <property type="entry name" value="PRK05092.1"/>
    <property type="match status" value="1"/>
</dbReference>
<dbReference type="NCBIfam" id="TIGR01693">
    <property type="entry name" value="UTase_glnD"/>
    <property type="match status" value="1"/>
</dbReference>
<dbReference type="PANTHER" id="PTHR47320">
    <property type="entry name" value="BIFUNCTIONAL URIDYLYLTRANSFERASE/URIDYLYL-REMOVING ENZYME"/>
    <property type="match status" value="1"/>
</dbReference>
<dbReference type="PANTHER" id="PTHR47320:SF1">
    <property type="entry name" value="BIFUNCTIONAL URIDYLYLTRANSFERASE_URIDYLYL-REMOVING ENZYME"/>
    <property type="match status" value="1"/>
</dbReference>
<dbReference type="Pfam" id="PF08335">
    <property type="entry name" value="GlnD_UR_UTase"/>
    <property type="match status" value="1"/>
</dbReference>
<dbReference type="Pfam" id="PF01966">
    <property type="entry name" value="HD"/>
    <property type="match status" value="1"/>
</dbReference>
<dbReference type="PIRSF" id="PIRSF006288">
    <property type="entry name" value="PII_uridyltransf"/>
    <property type="match status" value="1"/>
</dbReference>
<dbReference type="SMART" id="SM00471">
    <property type="entry name" value="HDc"/>
    <property type="match status" value="1"/>
</dbReference>
<dbReference type="SUPFAM" id="SSF55021">
    <property type="entry name" value="ACT-like"/>
    <property type="match status" value="2"/>
</dbReference>
<dbReference type="SUPFAM" id="SSF81301">
    <property type="entry name" value="Nucleotidyltransferase"/>
    <property type="match status" value="1"/>
</dbReference>
<dbReference type="SUPFAM" id="SSF81593">
    <property type="entry name" value="Nucleotidyltransferase substrate binding subunit/domain"/>
    <property type="match status" value="1"/>
</dbReference>
<dbReference type="SUPFAM" id="SSF81891">
    <property type="entry name" value="Poly A polymerase C-terminal region-like"/>
    <property type="match status" value="1"/>
</dbReference>
<dbReference type="PROSITE" id="PS51671">
    <property type="entry name" value="ACT"/>
    <property type="match status" value="2"/>
</dbReference>
<dbReference type="PROSITE" id="PS51831">
    <property type="entry name" value="HD"/>
    <property type="match status" value="1"/>
</dbReference>
<evidence type="ECO:0000255" key="1">
    <source>
        <dbReference type="HAMAP-Rule" id="MF_00277"/>
    </source>
</evidence>
<evidence type="ECO:0000255" key="2">
    <source>
        <dbReference type="PROSITE-ProRule" id="PRU01175"/>
    </source>
</evidence>